<dbReference type="EMBL" id="BC149087">
    <property type="protein sequence ID" value="AAI49088.1"/>
    <property type="molecule type" value="mRNA"/>
</dbReference>
<dbReference type="RefSeq" id="NP_001095748.1">
    <property type="nucleotide sequence ID" value="NM_001102278.1"/>
</dbReference>
<dbReference type="SMR" id="A6QP06"/>
<dbReference type="FunCoup" id="A6QP06">
    <property type="interactions" value="86"/>
</dbReference>
<dbReference type="STRING" id="9913.ENSBTAP00000062129"/>
<dbReference type="PaxDb" id="9913-ENSBTAP00000030362"/>
<dbReference type="GeneID" id="614406"/>
<dbReference type="KEGG" id="bta:614406"/>
<dbReference type="CTD" id="54843"/>
<dbReference type="eggNOG" id="KOG1028">
    <property type="taxonomic scope" value="Eukaryota"/>
</dbReference>
<dbReference type="InParanoid" id="A6QP06"/>
<dbReference type="OrthoDB" id="195679at2759"/>
<dbReference type="Proteomes" id="UP000009136">
    <property type="component" value="Unplaced"/>
</dbReference>
<dbReference type="GO" id="GO:0070382">
    <property type="term" value="C:exocytic vesicle"/>
    <property type="evidence" value="ECO:0000318"/>
    <property type="project" value="GO_Central"/>
</dbReference>
<dbReference type="GO" id="GO:0005886">
    <property type="term" value="C:plasma membrane"/>
    <property type="evidence" value="ECO:0000318"/>
    <property type="project" value="GO_Central"/>
</dbReference>
<dbReference type="GO" id="GO:0042043">
    <property type="term" value="F:neurexin family protein binding"/>
    <property type="evidence" value="ECO:0000318"/>
    <property type="project" value="GO_Central"/>
</dbReference>
<dbReference type="GO" id="GO:0031267">
    <property type="term" value="F:small GTPase binding"/>
    <property type="evidence" value="ECO:0007669"/>
    <property type="project" value="InterPro"/>
</dbReference>
<dbReference type="GO" id="GO:0006887">
    <property type="term" value="P:exocytosis"/>
    <property type="evidence" value="ECO:0000318"/>
    <property type="project" value="GO_Central"/>
</dbReference>
<dbReference type="GO" id="GO:0006886">
    <property type="term" value="P:intracellular protein transport"/>
    <property type="evidence" value="ECO:0007669"/>
    <property type="project" value="InterPro"/>
</dbReference>
<dbReference type="CDD" id="cd04020">
    <property type="entry name" value="C2B_SLP_1-2-3-4"/>
    <property type="match status" value="1"/>
</dbReference>
<dbReference type="FunFam" id="2.60.40.150:FF:000006">
    <property type="entry name" value="Synaptotagmin-like 5, isoform CRA_a"/>
    <property type="match status" value="1"/>
</dbReference>
<dbReference type="FunFam" id="2.60.40.150:FF:000040">
    <property type="entry name" value="synaptotagmin-like protein 2 isoform X2"/>
    <property type="match status" value="1"/>
</dbReference>
<dbReference type="Gene3D" id="6.10.250.3000">
    <property type="match status" value="1"/>
</dbReference>
<dbReference type="Gene3D" id="2.60.40.150">
    <property type="entry name" value="C2 domain"/>
    <property type="match status" value="2"/>
</dbReference>
<dbReference type="InterPro" id="IPR000008">
    <property type="entry name" value="C2_dom"/>
</dbReference>
<dbReference type="InterPro" id="IPR035892">
    <property type="entry name" value="C2_domain_sf"/>
</dbReference>
<dbReference type="InterPro" id="IPR041282">
    <property type="entry name" value="FYVE_2"/>
</dbReference>
<dbReference type="InterPro" id="IPR010911">
    <property type="entry name" value="Rab_BD"/>
</dbReference>
<dbReference type="InterPro" id="IPR043567">
    <property type="entry name" value="SYTL1-5_C2B"/>
</dbReference>
<dbReference type="PANTHER" id="PTHR45716">
    <property type="entry name" value="BITESIZE, ISOFORM I"/>
    <property type="match status" value="1"/>
</dbReference>
<dbReference type="PANTHER" id="PTHR45716:SF5">
    <property type="entry name" value="SYNAPTOTAGMIN-LIKE PROTEIN 2"/>
    <property type="match status" value="1"/>
</dbReference>
<dbReference type="Pfam" id="PF00168">
    <property type="entry name" value="C2"/>
    <property type="match status" value="2"/>
</dbReference>
<dbReference type="Pfam" id="PF02318">
    <property type="entry name" value="FYVE_2"/>
    <property type="match status" value="1"/>
</dbReference>
<dbReference type="SMART" id="SM00239">
    <property type="entry name" value="C2"/>
    <property type="match status" value="2"/>
</dbReference>
<dbReference type="SUPFAM" id="SSF49562">
    <property type="entry name" value="C2 domain (Calcium/lipid-binding domain, CaLB)"/>
    <property type="match status" value="2"/>
</dbReference>
<dbReference type="PROSITE" id="PS50004">
    <property type="entry name" value="C2"/>
    <property type="match status" value="2"/>
</dbReference>
<dbReference type="PROSITE" id="PS50916">
    <property type="entry name" value="RABBD"/>
    <property type="match status" value="1"/>
</dbReference>
<comment type="function">
    <text evidence="1">May act as a RAB27A effector protein and play a role in cytotoxic granule exocytosis in lymphocytes.</text>
</comment>
<comment type="subunit">
    <text evidence="1">Monomer. Binds NRXN1. Binds RAB27A that has been activated by GTP-binding via its N-terminus. Interacts with RAB27B (By similarity).</text>
</comment>
<comment type="subcellular location">
    <subcellularLocation>
        <location evidence="2">Cell membrane</location>
    </subcellularLocation>
    <text evidence="2">In the pancreatic alpha cells distributed in both peripheral and anterior regions. Localizes on the glucagon granules in the cell periphery.</text>
</comment>
<comment type="domain">
    <text evidence="1">The RabBD domain mediates interaction with RAB27A.</text>
</comment>
<gene>
    <name type="primary">SYTL2</name>
</gene>
<protein>
    <recommendedName>
        <fullName>Synaptotagmin-like protein 2</fullName>
    </recommendedName>
</protein>
<sequence length="943" mass="105851">MIDLSFLTEEEQEAIMKVLQRDAALKRAEEERVRHLPEKVKDDQQLKNMSGQWFYEAKAKRHRDRIHGADIIRVSMRKKRPQVADEQSKDRANRAKESWVNNVHKDAFLPPELTGVVEEPEEDVAPASPSSSVVNPVSTMIDASQENTRKSAISPAKPRKNPFNSSMLPEDHLSQQTKNEQSKNGKTGLFQTSKEGELSESKEESSILDISSQKLEKPKQTLPGPESGFPIKAPVPKPRKMIYKSQDLKQDDNQPFPRQRTDSLTTRGAPRGILKRNSSSSSTDSETVRFHQNFEPKSKIVSLGLTIHERISEKEHSLEDDSPSNSLEPLKHVRFSAVKDELPQSSGLVHGREVGEFSVLESDRLKNGTEDAGLTDEVWNDPQPSQYTNGLPFQSSASSPSPSKNETSQPTTSGSFPINEHPSSKEFLTTRAQSTENSHTINEHKTSSSELSKNPADELSCTEPESSQVPDCSSRDHQQGSEEEPSPVLKILERSAARKMPSKSLEDISSDSSNQAKVDNLPEELVRSAEDDQKADQEPDTNECIPGISTVSSQPDNQFSHPDKLKRMSKSVPAFLQDESDDRETDTASEGSYQLSRHKKSPSSLTNLSSNSGMTSLSSVSGSVMSVYSGDFGNLEVKGSIQFAIDYVDSLKELHVFVAQCKDLAAADIKKQRSDPYVKTYLLPDKGKMGKKKTLVVKKTLNPVYNEILRYKINKQILKTQKLNLSVWHRDTFKRNSFLGEVELDLETWDWDNKQNKQLKWYPLKRKTAPVPLEAENRGEMKLALQYVPEPVPGKKLPTTGEVHIWVKECLDLPLLRGSHLNSFVKCTILPDTSRKSRQKTRAVGKTTNPVFNHTMVYDGFRPEDLTEACVELTVWDHYKLTNQFLGGLRIGFGTGKSYGTEVDWMDSTSEEVALWEKMVKSPNTWIEAILPLRMLLIAKISK</sequence>
<keyword id="KW-1003">Cell membrane</keyword>
<keyword id="KW-0268">Exocytosis</keyword>
<keyword id="KW-0472">Membrane</keyword>
<keyword id="KW-1185">Reference proteome</keyword>
<keyword id="KW-0677">Repeat</keyword>
<organism>
    <name type="scientific">Bos taurus</name>
    <name type="common">Bovine</name>
    <dbReference type="NCBI Taxonomy" id="9913"/>
    <lineage>
        <taxon>Eukaryota</taxon>
        <taxon>Metazoa</taxon>
        <taxon>Chordata</taxon>
        <taxon>Craniata</taxon>
        <taxon>Vertebrata</taxon>
        <taxon>Euteleostomi</taxon>
        <taxon>Mammalia</taxon>
        <taxon>Eutheria</taxon>
        <taxon>Laurasiatheria</taxon>
        <taxon>Artiodactyla</taxon>
        <taxon>Ruminantia</taxon>
        <taxon>Pecora</taxon>
        <taxon>Bovidae</taxon>
        <taxon>Bovinae</taxon>
        <taxon>Bos</taxon>
    </lineage>
</organism>
<name>SYTL2_BOVIN</name>
<feature type="chain" id="PRO_0000382653" description="Synaptotagmin-like protein 2">
    <location>
        <begin position="1"/>
        <end position="943"/>
    </location>
</feature>
<feature type="domain" description="RabBD" evidence="4">
    <location>
        <begin position="1"/>
        <end position="57"/>
    </location>
</feature>
<feature type="domain" description="C2 1" evidence="3">
    <location>
        <begin position="637"/>
        <end position="762"/>
    </location>
</feature>
<feature type="domain" description="C2 2" evidence="3">
    <location>
        <begin position="777"/>
        <end position="906"/>
    </location>
</feature>
<feature type="region of interest" description="Disordered" evidence="5">
    <location>
        <begin position="77"/>
        <end position="99"/>
    </location>
</feature>
<feature type="region of interest" description="Disordered" evidence="5">
    <location>
        <begin position="118"/>
        <end position="291"/>
    </location>
</feature>
<feature type="region of interest" description="Disordered" evidence="5">
    <location>
        <begin position="361"/>
        <end position="613"/>
    </location>
</feature>
<feature type="compositionally biased region" description="Basic and acidic residues" evidence="5">
    <location>
        <begin position="82"/>
        <end position="99"/>
    </location>
</feature>
<feature type="compositionally biased region" description="Low complexity" evidence="5">
    <location>
        <begin position="125"/>
        <end position="138"/>
    </location>
</feature>
<feature type="compositionally biased region" description="Polar residues" evidence="5">
    <location>
        <begin position="174"/>
        <end position="192"/>
    </location>
</feature>
<feature type="compositionally biased region" description="Basic and acidic residues" evidence="5">
    <location>
        <begin position="194"/>
        <end position="205"/>
    </location>
</feature>
<feature type="compositionally biased region" description="Polar residues" evidence="5">
    <location>
        <begin position="382"/>
        <end position="394"/>
    </location>
</feature>
<feature type="compositionally biased region" description="Polar residues" evidence="5">
    <location>
        <begin position="404"/>
        <end position="416"/>
    </location>
</feature>
<feature type="compositionally biased region" description="Polar residues" evidence="5">
    <location>
        <begin position="426"/>
        <end position="440"/>
    </location>
</feature>
<feature type="compositionally biased region" description="Basic and acidic residues" evidence="5">
    <location>
        <begin position="524"/>
        <end position="537"/>
    </location>
</feature>
<feature type="compositionally biased region" description="Polar residues" evidence="5">
    <location>
        <begin position="549"/>
        <end position="560"/>
    </location>
</feature>
<feature type="compositionally biased region" description="Low complexity" evidence="5">
    <location>
        <begin position="603"/>
        <end position="613"/>
    </location>
</feature>
<evidence type="ECO:0000250" key="1"/>
<evidence type="ECO:0000250" key="2">
    <source>
        <dbReference type="UniProtKB" id="Q9HCH5"/>
    </source>
</evidence>
<evidence type="ECO:0000255" key="3">
    <source>
        <dbReference type="PROSITE-ProRule" id="PRU00041"/>
    </source>
</evidence>
<evidence type="ECO:0000255" key="4">
    <source>
        <dbReference type="PROSITE-ProRule" id="PRU00234"/>
    </source>
</evidence>
<evidence type="ECO:0000256" key="5">
    <source>
        <dbReference type="SAM" id="MobiDB-lite"/>
    </source>
</evidence>
<proteinExistence type="evidence at transcript level"/>
<reference key="1">
    <citation type="submission" date="2007-07" db="EMBL/GenBank/DDBJ databases">
        <authorList>
            <consortium name="NIH - Mammalian Gene Collection (MGC) project"/>
        </authorList>
    </citation>
    <scope>NUCLEOTIDE SEQUENCE [LARGE SCALE MRNA]</scope>
    <source>
        <strain>Hereford</strain>
        <tissue>Ascending colon</tissue>
    </source>
</reference>
<accession>A6QP06</accession>